<sequence length="487" mass="52008">MSLSTVNHAAAAAAAAGSGKSFSAAAPAAPSVRLPRTRAPAAAAVSAAAVGADRAADRVSALSQVSGVLGSQWGDEGKGKLVDVLAPRFDIVARCQGGANAGHTIYNSEGKKFALHLVPSGILHEGTLCVVGNGAVIHVPGFFNEIDGLESNGVNCNGRILVSDRAHLLFDLHQAVDGLREAELANSFIGTTKRGIGPCYSSKVTRNGLRVCDLRHMDTFGDKLDVLFKDAASRFEGFEYSKSMLREEVERYKRFAERLEPFIADTVHVLNESIQQKKKILVEGGQATMLDIDFGTYPFVTSSSPSAGGICTGLGIAPRCIGDLIGVVKAYTTRVGSGPFPTELFGEEGDLLRKSGMEFGTTTGRPRRCGWLDIVALKYCCEINGFSSLNLTKLDVLSGLPEVKLGVSYNQPDGQKLQSFPGDLDILEQVQVKYEVLPGWQSDISSVRSYSELPLAAQRYVERIEDLVGVPVHYIGVGPGRDALIYK</sequence>
<gene>
    <name evidence="2" type="primary">PURA</name>
    <name type="ORF">OsI_10220</name>
</gene>
<keyword id="KW-0150">Chloroplast</keyword>
<keyword id="KW-0342">GTP-binding</keyword>
<keyword id="KW-0436">Ligase</keyword>
<keyword id="KW-0460">Magnesium</keyword>
<keyword id="KW-0479">Metal-binding</keyword>
<keyword id="KW-0547">Nucleotide-binding</keyword>
<keyword id="KW-0934">Plastid</keyword>
<keyword id="KW-0658">Purine biosynthesis</keyword>
<keyword id="KW-1185">Reference proteome</keyword>
<keyword id="KW-0809">Transit peptide</keyword>
<comment type="function">
    <text evidence="1">Plays an important role in the de novo pathway and in the salvage pathway of purine nucleotide biosynthesis. Catalyzes the first committed step in the biosynthesis of AMP from IMP (By similarity).</text>
</comment>
<comment type="catalytic activity">
    <reaction evidence="2">
        <text>IMP + L-aspartate + GTP = N(6)-(1,2-dicarboxyethyl)-AMP + GDP + phosphate + 2 H(+)</text>
        <dbReference type="Rhea" id="RHEA:15753"/>
        <dbReference type="ChEBI" id="CHEBI:15378"/>
        <dbReference type="ChEBI" id="CHEBI:29991"/>
        <dbReference type="ChEBI" id="CHEBI:37565"/>
        <dbReference type="ChEBI" id="CHEBI:43474"/>
        <dbReference type="ChEBI" id="CHEBI:57567"/>
        <dbReference type="ChEBI" id="CHEBI:58053"/>
        <dbReference type="ChEBI" id="CHEBI:58189"/>
        <dbReference type="EC" id="6.3.4.4"/>
    </reaction>
</comment>
<comment type="cofactor">
    <cofactor evidence="2">
        <name>Mg(2+)</name>
        <dbReference type="ChEBI" id="CHEBI:18420"/>
    </cofactor>
    <text evidence="2">Binds 1 Mg(2+) ion per subunit.</text>
</comment>
<comment type="pathway">
    <text evidence="2">Purine metabolism; AMP biosynthesis via de novo pathway; AMP from IMP: step 1/2.</text>
</comment>
<comment type="subunit">
    <text evidence="2">Homodimer.</text>
</comment>
<comment type="subcellular location">
    <subcellularLocation>
        <location evidence="2">Plastid</location>
        <location evidence="2">Chloroplast</location>
    </subcellularLocation>
</comment>
<comment type="similarity">
    <text evidence="2">Belongs to the adenylosuccinate synthetase family.</text>
</comment>
<comment type="sequence caution" evidence="3">
    <conflict type="erroneous gene model prediction">
        <sequence resource="EMBL-CDS" id="EAY88745"/>
    </conflict>
</comment>
<proteinExistence type="inferred from homology"/>
<protein>
    <recommendedName>
        <fullName evidence="2">Adenylosuccinate synthetase, chloroplastic</fullName>
        <shortName evidence="2">AMPSase</shortName>
        <shortName evidence="2">AdSS</shortName>
        <ecNumber evidence="2">6.3.4.4</ecNumber>
    </recommendedName>
    <alternativeName>
        <fullName evidence="2">IMP--aspartate ligase</fullName>
    </alternativeName>
</protein>
<reference key="1">
    <citation type="journal article" date="2005" name="PLoS Biol.">
        <title>The genomes of Oryza sativa: a history of duplications.</title>
        <authorList>
            <person name="Yu J."/>
            <person name="Wang J."/>
            <person name="Lin W."/>
            <person name="Li S."/>
            <person name="Li H."/>
            <person name="Zhou J."/>
            <person name="Ni P."/>
            <person name="Dong W."/>
            <person name="Hu S."/>
            <person name="Zeng C."/>
            <person name="Zhang J."/>
            <person name="Zhang Y."/>
            <person name="Li R."/>
            <person name="Xu Z."/>
            <person name="Li S."/>
            <person name="Li X."/>
            <person name="Zheng H."/>
            <person name="Cong L."/>
            <person name="Lin L."/>
            <person name="Yin J."/>
            <person name="Geng J."/>
            <person name="Li G."/>
            <person name="Shi J."/>
            <person name="Liu J."/>
            <person name="Lv H."/>
            <person name="Li J."/>
            <person name="Wang J."/>
            <person name="Deng Y."/>
            <person name="Ran L."/>
            <person name="Shi X."/>
            <person name="Wang X."/>
            <person name="Wu Q."/>
            <person name="Li C."/>
            <person name="Ren X."/>
            <person name="Wang J."/>
            <person name="Wang X."/>
            <person name="Li D."/>
            <person name="Liu D."/>
            <person name="Zhang X."/>
            <person name="Ji Z."/>
            <person name="Zhao W."/>
            <person name="Sun Y."/>
            <person name="Zhang Z."/>
            <person name="Bao J."/>
            <person name="Han Y."/>
            <person name="Dong L."/>
            <person name="Ji J."/>
            <person name="Chen P."/>
            <person name="Wu S."/>
            <person name="Liu J."/>
            <person name="Xiao Y."/>
            <person name="Bu D."/>
            <person name="Tan J."/>
            <person name="Yang L."/>
            <person name="Ye C."/>
            <person name="Zhang J."/>
            <person name="Xu J."/>
            <person name="Zhou Y."/>
            <person name="Yu Y."/>
            <person name="Zhang B."/>
            <person name="Zhuang S."/>
            <person name="Wei H."/>
            <person name="Liu B."/>
            <person name="Lei M."/>
            <person name="Yu H."/>
            <person name="Li Y."/>
            <person name="Xu H."/>
            <person name="Wei S."/>
            <person name="He X."/>
            <person name="Fang L."/>
            <person name="Zhang Z."/>
            <person name="Zhang Y."/>
            <person name="Huang X."/>
            <person name="Su Z."/>
            <person name="Tong W."/>
            <person name="Li J."/>
            <person name="Tong Z."/>
            <person name="Li S."/>
            <person name="Ye J."/>
            <person name="Wang L."/>
            <person name="Fang L."/>
            <person name="Lei T."/>
            <person name="Chen C.-S."/>
            <person name="Chen H.-C."/>
            <person name="Xu Z."/>
            <person name="Li H."/>
            <person name="Huang H."/>
            <person name="Zhang F."/>
            <person name="Xu H."/>
            <person name="Li N."/>
            <person name="Zhao C."/>
            <person name="Li S."/>
            <person name="Dong L."/>
            <person name="Huang Y."/>
            <person name="Li L."/>
            <person name="Xi Y."/>
            <person name="Qi Q."/>
            <person name="Li W."/>
            <person name="Zhang B."/>
            <person name="Hu W."/>
            <person name="Zhang Y."/>
            <person name="Tian X."/>
            <person name="Jiao Y."/>
            <person name="Liang X."/>
            <person name="Jin J."/>
            <person name="Gao L."/>
            <person name="Zheng W."/>
            <person name="Hao B."/>
            <person name="Liu S.-M."/>
            <person name="Wang W."/>
            <person name="Yuan L."/>
            <person name="Cao M."/>
            <person name="McDermott J."/>
            <person name="Samudrala R."/>
            <person name="Wang J."/>
            <person name="Wong G.K.-S."/>
            <person name="Yang H."/>
        </authorList>
    </citation>
    <scope>NUCLEOTIDE SEQUENCE [LARGE SCALE GENOMIC DNA]</scope>
    <source>
        <strain>cv. 93-11</strain>
    </source>
</reference>
<accession>A2XD35</accession>
<feature type="transit peptide" description="Chloroplast" evidence="2">
    <location>
        <begin position="1"/>
        <end position="46"/>
    </location>
</feature>
<feature type="chain" id="PRO_0000399277" description="Adenylosuccinate synthetase, chloroplastic">
    <location>
        <begin position="47"/>
        <end position="487"/>
    </location>
</feature>
<feature type="active site" description="Proton acceptor" evidence="2">
    <location>
        <position position="75"/>
    </location>
</feature>
<feature type="active site" description="Proton donor" evidence="2">
    <location>
        <position position="103"/>
    </location>
</feature>
<feature type="binding site" evidence="2">
    <location>
        <begin position="74"/>
        <end position="80"/>
    </location>
    <ligand>
        <name>GTP</name>
        <dbReference type="ChEBI" id="CHEBI:37565"/>
    </ligand>
</feature>
<feature type="binding site" description="in other chain" evidence="2">
    <location>
        <begin position="75"/>
        <end position="78"/>
    </location>
    <ligand>
        <name>IMP</name>
        <dbReference type="ChEBI" id="CHEBI:58053"/>
        <note>ligand shared between dimeric partners</note>
    </ligand>
</feature>
<feature type="binding site" evidence="2">
    <location>
        <position position="75"/>
    </location>
    <ligand>
        <name>Mg(2+)</name>
        <dbReference type="ChEBI" id="CHEBI:18420"/>
    </ligand>
</feature>
<feature type="binding site" description="in other chain" evidence="2">
    <location>
        <begin position="100"/>
        <end position="103"/>
    </location>
    <ligand>
        <name>IMP</name>
        <dbReference type="ChEBI" id="CHEBI:58053"/>
        <note>ligand shared between dimeric partners</note>
    </ligand>
</feature>
<feature type="binding site" evidence="2">
    <location>
        <begin position="102"/>
        <end position="104"/>
    </location>
    <ligand>
        <name>GTP</name>
        <dbReference type="ChEBI" id="CHEBI:37565"/>
    </ligand>
</feature>
<feature type="binding site" evidence="2">
    <location>
        <position position="102"/>
    </location>
    <ligand>
        <name>Mg(2+)</name>
        <dbReference type="ChEBI" id="CHEBI:18420"/>
    </ligand>
</feature>
<feature type="binding site" description="in other chain" evidence="2">
    <location>
        <position position="192"/>
    </location>
    <ligand>
        <name>IMP</name>
        <dbReference type="ChEBI" id="CHEBI:58053"/>
        <note>ligand shared between dimeric partners</note>
    </ligand>
</feature>
<feature type="binding site" evidence="2">
    <location>
        <position position="206"/>
    </location>
    <ligand>
        <name>IMP</name>
        <dbReference type="ChEBI" id="CHEBI:58053"/>
        <note>ligand shared between dimeric partners</note>
    </ligand>
</feature>
<feature type="binding site" description="in other chain" evidence="2">
    <location>
        <position position="286"/>
    </location>
    <ligand>
        <name>IMP</name>
        <dbReference type="ChEBI" id="CHEBI:58053"/>
        <note>ligand shared between dimeric partners</note>
    </ligand>
</feature>
<feature type="binding site" description="in other chain" evidence="2">
    <location>
        <position position="301"/>
    </location>
    <ligand>
        <name>IMP</name>
        <dbReference type="ChEBI" id="CHEBI:58053"/>
        <note>ligand shared between dimeric partners</note>
    </ligand>
</feature>
<feature type="binding site" evidence="2">
    <location>
        <begin position="361"/>
        <end position="367"/>
    </location>
    <ligand>
        <name>substrate</name>
    </ligand>
</feature>
<feature type="binding site" description="in other chain" evidence="2">
    <location>
        <position position="365"/>
    </location>
    <ligand>
        <name>IMP</name>
        <dbReference type="ChEBI" id="CHEBI:58053"/>
        <note>ligand shared between dimeric partners</note>
    </ligand>
</feature>
<feature type="binding site" evidence="2">
    <location>
        <position position="367"/>
    </location>
    <ligand>
        <name>GTP</name>
        <dbReference type="ChEBI" id="CHEBI:37565"/>
    </ligand>
</feature>
<feature type="binding site" evidence="2">
    <location>
        <begin position="393"/>
        <end position="395"/>
    </location>
    <ligand>
        <name>GTP</name>
        <dbReference type="ChEBI" id="CHEBI:37565"/>
    </ligand>
</feature>
<feature type="binding site" evidence="2">
    <location>
        <begin position="476"/>
        <end position="478"/>
    </location>
    <ligand>
        <name>GTP</name>
        <dbReference type="ChEBI" id="CHEBI:37565"/>
    </ligand>
</feature>
<organism>
    <name type="scientific">Oryza sativa subsp. indica</name>
    <name type="common">Rice</name>
    <dbReference type="NCBI Taxonomy" id="39946"/>
    <lineage>
        <taxon>Eukaryota</taxon>
        <taxon>Viridiplantae</taxon>
        <taxon>Streptophyta</taxon>
        <taxon>Embryophyta</taxon>
        <taxon>Tracheophyta</taxon>
        <taxon>Spermatophyta</taxon>
        <taxon>Magnoliopsida</taxon>
        <taxon>Liliopsida</taxon>
        <taxon>Poales</taxon>
        <taxon>Poaceae</taxon>
        <taxon>BOP clade</taxon>
        <taxon>Oryzoideae</taxon>
        <taxon>Oryzeae</taxon>
        <taxon>Oryzinae</taxon>
        <taxon>Oryza</taxon>
        <taxon>Oryza sativa</taxon>
    </lineage>
</organism>
<evidence type="ECO:0000250" key="1"/>
<evidence type="ECO:0000255" key="2">
    <source>
        <dbReference type="HAMAP-Rule" id="MF_03125"/>
    </source>
</evidence>
<evidence type="ECO:0000305" key="3"/>
<dbReference type="EC" id="6.3.4.4" evidence="2"/>
<dbReference type="EMBL" id="CM000128">
    <property type="protein sequence ID" value="EAY88745.1"/>
    <property type="status" value="ALT_SEQ"/>
    <property type="molecule type" value="Genomic_DNA"/>
</dbReference>
<dbReference type="SMR" id="A2XD35"/>
<dbReference type="STRING" id="39946.A2XD35"/>
<dbReference type="EnsemblPlants" id="OsGoSa_03g0005520.01">
    <property type="protein sequence ID" value="OsGoSa_03g0005520.01"/>
    <property type="gene ID" value="OsGoSa_03g0005520"/>
</dbReference>
<dbReference type="EnsemblPlants" id="OsIR64_03g0005450.01">
    <property type="protein sequence ID" value="OsIR64_03g0005450.01"/>
    <property type="gene ID" value="OsIR64_03g0005450"/>
</dbReference>
<dbReference type="EnsemblPlants" id="OsKYG_03g0005540.01">
    <property type="protein sequence ID" value="OsKYG_03g0005540.01"/>
    <property type="gene ID" value="OsKYG_03g0005540"/>
</dbReference>
<dbReference type="EnsemblPlants" id="OsLaMu_03g0005530.01">
    <property type="protein sequence ID" value="OsLaMu_03g0005530.01"/>
    <property type="gene ID" value="OsLaMu_03g0005530"/>
</dbReference>
<dbReference type="EnsemblPlants" id="OsLima_03g0005540.01">
    <property type="protein sequence ID" value="OsLima_03g0005540.01"/>
    <property type="gene ID" value="OsLima_03g0005540"/>
</dbReference>
<dbReference type="EnsemblPlants" id="OsLiXu_03g0005550.01">
    <property type="protein sequence ID" value="OsLiXu_03g0005550.01"/>
    <property type="gene ID" value="OsLiXu_03g0005550"/>
</dbReference>
<dbReference type="EnsemblPlants" id="OsMH63_03G005500_01">
    <property type="protein sequence ID" value="OsMH63_03G005500_01"/>
    <property type="gene ID" value="OsMH63_03G005500"/>
</dbReference>
<dbReference type="EnsemblPlants" id="OsPr106_03g0005570.01">
    <property type="protein sequence ID" value="OsPr106_03g0005570.01"/>
    <property type="gene ID" value="OsPr106_03g0005570"/>
</dbReference>
<dbReference type="EnsemblPlants" id="OsZS97_03G005380_01">
    <property type="protein sequence ID" value="OsZS97_03G005380_01"/>
    <property type="gene ID" value="OsZS97_03G005380"/>
</dbReference>
<dbReference type="Gramene" id="OsGoSa_03g0005520.01">
    <property type="protein sequence ID" value="OsGoSa_03g0005520.01"/>
    <property type="gene ID" value="OsGoSa_03g0005520"/>
</dbReference>
<dbReference type="Gramene" id="OsIR64_03g0005450.01">
    <property type="protein sequence ID" value="OsIR64_03g0005450.01"/>
    <property type="gene ID" value="OsIR64_03g0005450"/>
</dbReference>
<dbReference type="Gramene" id="OsKYG_03g0005540.01">
    <property type="protein sequence ID" value="OsKYG_03g0005540.01"/>
    <property type="gene ID" value="OsKYG_03g0005540"/>
</dbReference>
<dbReference type="Gramene" id="OsLaMu_03g0005530.01">
    <property type="protein sequence ID" value="OsLaMu_03g0005530.01"/>
    <property type="gene ID" value="OsLaMu_03g0005530"/>
</dbReference>
<dbReference type="Gramene" id="OsLima_03g0005540.01">
    <property type="protein sequence ID" value="OsLima_03g0005540.01"/>
    <property type="gene ID" value="OsLima_03g0005540"/>
</dbReference>
<dbReference type="Gramene" id="OsLiXu_03g0005550.01">
    <property type="protein sequence ID" value="OsLiXu_03g0005550.01"/>
    <property type="gene ID" value="OsLiXu_03g0005550"/>
</dbReference>
<dbReference type="Gramene" id="OsMH63_03G005500_01">
    <property type="protein sequence ID" value="OsMH63_03G005500_01"/>
    <property type="gene ID" value="OsMH63_03G005500"/>
</dbReference>
<dbReference type="Gramene" id="OsPr106_03g0005570.01">
    <property type="protein sequence ID" value="OsPr106_03g0005570.01"/>
    <property type="gene ID" value="OsPr106_03g0005570"/>
</dbReference>
<dbReference type="Gramene" id="OsZS97_03G005380_01">
    <property type="protein sequence ID" value="OsZS97_03G005380_01"/>
    <property type="gene ID" value="OsZS97_03G005380"/>
</dbReference>
<dbReference type="HOGENOM" id="CLU_029848_0_0_1"/>
<dbReference type="OrthoDB" id="10265645at2759"/>
<dbReference type="UniPathway" id="UPA00075">
    <property type="reaction ID" value="UER00335"/>
</dbReference>
<dbReference type="Proteomes" id="UP000007015">
    <property type="component" value="Chromosome 3"/>
</dbReference>
<dbReference type="GO" id="GO:0009507">
    <property type="term" value="C:chloroplast"/>
    <property type="evidence" value="ECO:0007669"/>
    <property type="project" value="UniProtKB-SubCell"/>
</dbReference>
<dbReference type="GO" id="GO:0004019">
    <property type="term" value="F:adenylosuccinate synthase activity"/>
    <property type="evidence" value="ECO:0007669"/>
    <property type="project" value="UniProtKB-UniRule"/>
</dbReference>
<dbReference type="GO" id="GO:0005525">
    <property type="term" value="F:GTP binding"/>
    <property type="evidence" value="ECO:0007669"/>
    <property type="project" value="UniProtKB-UniRule"/>
</dbReference>
<dbReference type="GO" id="GO:0000287">
    <property type="term" value="F:magnesium ion binding"/>
    <property type="evidence" value="ECO:0007669"/>
    <property type="project" value="UniProtKB-UniRule"/>
</dbReference>
<dbReference type="GO" id="GO:0044208">
    <property type="term" value="P:'de novo' AMP biosynthetic process"/>
    <property type="evidence" value="ECO:0007669"/>
    <property type="project" value="UniProtKB-UniRule"/>
</dbReference>
<dbReference type="GO" id="GO:0046040">
    <property type="term" value="P:IMP metabolic process"/>
    <property type="evidence" value="ECO:0007669"/>
    <property type="project" value="TreeGrafter"/>
</dbReference>
<dbReference type="CDD" id="cd03108">
    <property type="entry name" value="AdSS"/>
    <property type="match status" value="1"/>
</dbReference>
<dbReference type="FunFam" id="3.90.170.10:FF:000001">
    <property type="entry name" value="Adenylosuccinate synthetase"/>
    <property type="match status" value="1"/>
</dbReference>
<dbReference type="FunFam" id="1.10.300.10:FF:000002">
    <property type="entry name" value="Adenylosuccinate synthetase, chloroplastic"/>
    <property type="match status" value="1"/>
</dbReference>
<dbReference type="Gene3D" id="3.40.440.10">
    <property type="entry name" value="Adenylosuccinate Synthetase, subunit A, domain 1"/>
    <property type="match status" value="1"/>
</dbReference>
<dbReference type="Gene3D" id="1.10.300.10">
    <property type="entry name" value="Adenylosuccinate Synthetase, subunit A, domain 2"/>
    <property type="match status" value="1"/>
</dbReference>
<dbReference type="Gene3D" id="3.90.170.10">
    <property type="entry name" value="Adenylosuccinate Synthetase, subunit A, domain 3"/>
    <property type="match status" value="1"/>
</dbReference>
<dbReference type="HAMAP" id="MF_00011">
    <property type="entry name" value="Adenylosucc_synth"/>
    <property type="match status" value="1"/>
</dbReference>
<dbReference type="InterPro" id="IPR018220">
    <property type="entry name" value="Adenylosuccin_syn_GTP-bd"/>
</dbReference>
<dbReference type="InterPro" id="IPR033128">
    <property type="entry name" value="Adenylosuccin_syn_Lys_AS"/>
</dbReference>
<dbReference type="InterPro" id="IPR042109">
    <property type="entry name" value="Adenylosuccinate_synth_dom1"/>
</dbReference>
<dbReference type="InterPro" id="IPR042110">
    <property type="entry name" value="Adenylosuccinate_synth_dom2"/>
</dbReference>
<dbReference type="InterPro" id="IPR042111">
    <property type="entry name" value="Adenylosuccinate_synth_dom3"/>
</dbReference>
<dbReference type="InterPro" id="IPR001114">
    <property type="entry name" value="Adenylosuccinate_synthetase"/>
</dbReference>
<dbReference type="InterPro" id="IPR027417">
    <property type="entry name" value="P-loop_NTPase"/>
</dbReference>
<dbReference type="NCBIfam" id="NF002223">
    <property type="entry name" value="PRK01117.1"/>
    <property type="match status" value="1"/>
</dbReference>
<dbReference type="NCBIfam" id="TIGR00184">
    <property type="entry name" value="purA"/>
    <property type="match status" value="1"/>
</dbReference>
<dbReference type="PANTHER" id="PTHR11846">
    <property type="entry name" value="ADENYLOSUCCINATE SYNTHETASE"/>
    <property type="match status" value="1"/>
</dbReference>
<dbReference type="PANTHER" id="PTHR11846:SF19">
    <property type="entry name" value="ADENYLOSUCCINATE SYNTHETASE 1, CHLOROPLASTIC"/>
    <property type="match status" value="1"/>
</dbReference>
<dbReference type="Pfam" id="PF00709">
    <property type="entry name" value="Adenylsucc_synt"/>
    <property type="match status" value="1"/>
</dbReference>
<dbReference type="SMART" id="SM00788">
    <property type="entry name" value="Adenylsucc_synt"/>
    <property type="match status" value="1"/>
</dbReference>
<dbReference type="SUPFAM" id="SSF52540">
    <property type="entry name" value="P-loop containing nucleoside triphosphate hydrolases"/>
    <property type="match status" value="1"/>
</dbReference>
<dbReference type="PROSITE" id="PS01266">
    <property type="entry name" value="ADENYLOSUCCIN_SYN_1"/>
    <property type="match status" value="1"/>
</dbReference>
<dbReference type="PROSITE" id="PS00513">
    <property type="entry name" value="ADENYLOSUCCIN_SYN_2"/>
    <property type="match status" value="1"/>
</dbReference>
<name>PURA_ORYSI</name>